<keyword id="KW-0472">Membrane</keyword>
<keyword id="KW-1185">Reference proteome</keyword>
<keyword id="KW-0812">Transmembrane</keyword>
<keyword id="KW-1133">Transmembrane helix</keyword>
<feature type="chain" id="PRO_0000298929" description="Solute carrier family 35 member E4">
    <location>
        <begin position="1"/>
        <end position="350"/>
    </location>
</feature>
<feature type="transmembrane region" description="Helical" evidence="2">
    <location>
        <begin position="40"/>
        <end position="60"/>
    </location>
</feature>
<feature type="transmembrane region" description="Helical" evidence="2">
    <location>
        <begin position="79"/>
        <end position="99"/>
    </location>
</feature>
<feature type="transmembrane region" description="Helical" evidence="2">
    <location>
        <begin position="110"/>
        <end position="130"/>
    </location>
</feature>
<feature type="transmembrane region" description="Helical" evidence="2">
    <location>
        <begin position="135"/>
        <end position="155"/>
    </location>
</feature>
<feature type="transmembrane region" description="Helical" evidence="2">
    <location>
        <begin position="218"/>
        <end position="238"/>
    </location>
</feature>
<feature type="transmembrane region" description="Helical" evidence="2">
    <location>
        <begin position="258"/>
        <end position="278"/>
    </location>
</feature>
<feature type="transmembrane region" description="Helical" evidence="2">
    <location>
        <begin position="279"/>
        <end position="299"/>
    </location>
</feature>
<feature type="transmembrane region" description="Helical" evidence="2">
    <location>
        <begin position="301"/>
        <end position="321"/>
    </location>
</feature>
<feature type="domain" description="EamA">
    <location>
        <begin position="125"/>
        <end position="179"/>
    </location>
</feature>
<protein>
    <recommendedName>
        <fullName>Solute carrier family 35 member E4</fullName>
    </recommendedName>
</protein>
<sequence length="350" mass="37041">MCRCPLEHHEVRMTSAEAIAVAGSAQEHGRPKWPPDKPQVLGQPALARVVVAALVWLLAGASMSSLNKWIFTVHGFGRPLLLSALHMLAAAVACHWGAQRPVPHSIHRRVLLLSLTFGTSMACGNVGLSTVPLDLAQLATTTTPLFTLALSALLLGRRHHPLQFAAMGPLCLGAACSLAGELRAPPAGCGFLLVATCLRGFKSVQQSALLQEERLDAVTLLYATSLPSFCLLAGAALVLEAGAAPPLPPTDSRLWACVLLSCFLSVVYNLASFSLLALTSALTVHVLGNLTVVGNLILSRLLFGSHLSALSYVGIALTLSGMFLYHNCESVASWATRRGLWNRDQPGKGL</sequence>
<reference key="1">
    <citation type="journal article" date="2004" name="Genome Res.">
        <title>The status, quality, and expansion of the NIH full-length cDNA project: the Mammalian Gene Collection (MGC).</title>
        <authorList>
            <consortium name="The MGC Project Team"/>
        </authorList>
    </citation>
    <scope>NUCLEOTIDE SEQUENCE [LARGE SCALE MRNA]</scope>
    <source>
        <tissue>Heart</tissue>
    </source>
</reference>
<proteinExistence type="evidence at transcript level"/>
<accession>Q5RKL7</accession>
<gene>
    <name type="primary">Slc35e4</name>
</gene>
<dbReference type="EMBL" id="BC085693">
    <property type="protein sequence ID" value="AAH85693.1"/>
    <property type="molecule type" value="mRNA"/>
</dbReference>
<dbReference type="RefSeq" id="NP_695228.2">
    <property type="nucleotide sequence ID" value="NM_153316.2"/>
</dbReference>
<dbReference type="SMR" id="Q5RKL7"/>
<dbReference type="FunCoup" id="Q5RKL7">
    <property type="interactions" value="92"/>
</dbReference>
<dbReference type="PhosphoSitePlus" id="Q5RKL7"/>
<dbReference type="PaxDb" id="10116-ENSRNOP00000005646"/>
<dbReference type="Ensembl" id="ENSRNOT00000005646.5">
    <property type="protein sequence ID" value="ENSRNOP00000005646.3"/>
    <property type="gene ID" value="ENSRNOG00000004168.8"/>
</dbReference>
<dbReference type="GeneID" id="266687"/>
<dbReference type="KEGG" id="rno:266687"/>
<dbReference type="UCSC" id="RGD:708484">
    <property type="organism name" value="rat"/>
</dbReference>
<dbReference type="AGR" id="RGD:708484"/>
<dbReference type="CTD" id="339665"/>
<dbReference type="RGD" id="708484">
    <property type="gene designation" value="Slc35e4"/>
</dbReference>
<dbReference type="eggNOG" id="KOG1441">
    <property type="taxonomic scope" value="Eukaryota"/>
</dbReference>
<dbReference type="GeneTree" id="ENSGT00730000111291"/>
<dbReference type="HOGENOM" id="CLU_022332_2_0_1"/>
<dbReference type="InParanoid" id="Q5RKL7"/>
<dbReference type="OMA" id="MAGLNKW"/>
<dbReference type="OrthoDB" id="10261634at2759"/>
<dbReference type="PhylomeDB" id="Q5RKL7"/>
<dbReference type="TreeFam" id="TF328788"/>
<dbReference type="PRO" id="PR:Q5RKL7"/>
<dbReference type="Proteomes" id="UP000002494">
    <property type="component" value="Chromosome 14"/>
</dbReference>
<dbReference type="Bgee" id="ENSRNOG00000004168">
    <property type="expression patterns" value="Expressed in esophagus and 20 other cell types or tissues"/>
</dbReference>
<dbReference type="ExpressionAtlas" id="Q5RKL7">
    <property type="expression patterns" value="baseline and differential"/>
</dbReference>
<dbReference type="GO" id="GO:0005794">
    <property type="term" value="C:Golgi apparatus"/>
    <property type="evidence" value="ECO:0000318"/>
    <property type="project" value="GO_Central"/>
</dbReference>
<dbReference type="GO" id="GO:0016020">
    <property type="term" value="C:membrane"/>
    <property type="evidence" value="ECO:0007669"/>
    <property type="project" value="UniProtKB-SubCell"/>
</dbReference>
<dbReference type="GO" id="GO:0015297">
    <property type="term" value="F:antiporter activity"/>
    <property type="evidence" value="ECO:0000318"/>
    <property type="project" value="GO_Central"/>
</dbReference>
<dbReference type="GO" id="GO:0055085">
    <property type="term" value="P:transmembrane transport"/>
    <property type="evidence" value="ECO:0000318"/>
    <property type="project" value="GO_Central"/>
</dbReference>
<dbReference type="InterPro" id="IPR004853">
    <property type="entry name" value="Sugar_P_trans_dom"/>
</dbReference>
<dbReference type="InterPro" id="IPR050186">
    <property type="entry name" value="TPT_transporter"/>
</dbReference>
<dbReference type="PANTHER" id="PTHR11132">
    <property type="entry name" value="SOLUTE CARRIER FAMILY 35"/>
    <property type="match status" value="1"/>
</dbReference>
<dbReference type="Pfam" id="PF03151">
    <property type="entry name" value="TPT"/>
    <property type="match status" value="1"/>
</dbReference>
<dbReference type="SUPFAM" id="SSF103481">
    <property type="entry name" value="Multidrug resistance efflux transporter EmrE"/>
    <property type="match status" value="2"/>
</dbReference>
<name>S35E4_RAT</name>
<comment type="function">
    <text evidence="1">Putative transporter.</text>
</comment>
<comment type="subcellular location">
    <subcellularLocation>
        <location evidence="3">Membrane</location>
        <topology evidence="3">Multi-pass membrane protein</topology>
    </subcellularLocation>
</comment>
<comment type="similarity">
    <text evidence="3">Belongs to the TPT transporter family. SLC35E subfamily.</text>
</comment>
<evidence type="ECO:0000250" key="1"/>
<evidence type="ECO:0000255" key="2"/>
<evidence type="ECO:0000305" key="3"/>
<organism>
    <name type="scientific">Rattus norvegicus</name>
    <name type="common">Rat</name>
    <dbReference type="NCBI Taxonomy" id="10116"/>
    <lineage>
        <taxon>Eukaryota</taxon>
        <taxon>Metazoa</taxon>
        <taxon>Chordata</taxon>
        <taxon>Craniata</taxon>
        <taxon>Vertebrata</taxon>
        <taxon>Euteleostomi</taxon>
        <taxon>Mammalia</taxon>
        <taxon>Eutheria</taxon>
        <taxon>Euarchontoglires</taxon>
        <taxon>Glires</taxon>
        <taxon>Rodentia</taxon>
        <taxon>Myomorpha</taxon>
        <taxon>Muroidea</taxon>
        <taxon>Muridae</taxon>
        <taxon>Murinae</taxon>
        <taxon>Rattus</taxon>
    </lineage>
</organism>